<feature type="chain" id="PRO_1000205149" description="Type 2 DNA topoisomerase 6 subunit B">
    <location>
        <begin position="1"/>
        <end position="566"/>
    </location>
</feature>
<feature type="binding site" evidence="1">
    <location>
        <position position="48"/>
    </location>
    <ligand>
        <name>ATP</name>
        <dbReference type="ChEBI" id="CHEBI:30616"/>
    </ligand>
</feature>
<feature type="binding site" evidence="1">
    <location>
        <position position="80"/>
    </location>
    <ligand>
        <name>ATP</name>
        <dbReference type="ChEBI" id="CHEBI:30616"/>
    </ligand>
</feature>
<feature type="binding site" evidence="1">
    <location>
        <begin position="101"/>
        <end position="102"/>
    </location>
    <ligand>
        <name>ATP</name>
        <dbReference type="ChEBI" id="CHEBI:30616"/>
    </ligand>
</feature>
<feature type="binding site" evidence="1">
    <location>
        <begin position="111"/>
        <end position="118"/>
    </location>
    <ligand>
        <name>ATP</name>
        <dbReference type="ChEBI" id="CHEBI:30616"/>
    </ligand>
</feature>
<feature type="binding site" evidence="1">
    <location>
        <position position="475"/>
    </location>
    <ligand>
        <name>ATP</name>
        <dbReference type="ChEBI" id="CHEBI:30616"/>
    </ligand>
</feature>
<dbReference type="EC" id="5.6.2.2" evidence="1"/>
<dbReference type="EMBL" id="CP001463">
    <property type="protein sequence ID" value="ACS90159.1"/>
    <property type="molecule type" value="Genomic_DNA"/>
</dbReference>
<dbReference type="RefSeq" id="WP_015849378.1">
    <property type="nucleotide sequence ID" value="NC_012883.1"/>
</dbReference>
<dbReference type="SMR" id="C6A3G4"/>
<dbReference type="STRING" id="604354.TSIB_1105"/>
<dbReference type="GeneID" id="8096103"/>
<dbReference type="KEGG" id="tsi:TSIB_1105"/>
<dbReference type="eggNOG" id="arCOG01165">
    <property type="taxonomic scope" value="Archaea"/>
</dbReference>
<dbReference type="HOGENOM" id="CLU_006403_0_0_2"/>
<dbReference type="OrthoDB" id="65493at2157"/>
<dbReference type="Proteomes" id="UP000009079">
    <property type="component" value="Chromosome"/>
</dbReference>
<dbReference type="GO" id="GO:0005524">
    <property type="term" value="F:ATP binding"/>
    <property type="evidence" value="ECO:0007669"/>
    <property type="project" value="UniProtKB-UniRule"/>
</dbReference>
<dbReference type="GO" id="GO:0003677">
    <property type="term" value="F:DNA binding"/>
    <property type="evidence" value="ECO:0007669"/>
    <property type="project" value="UniProtKB-UniRule"/>
</dbReference>
<dbReference type="GO" id="GO:0003918">
    <property type="term" value="F:DNA topoisomerase type II (double strand cut, ATP-hydrolyzing) activity"/>
    <property type="evidence" value="ECO:0007669"/>
    <property type="project" value="UniProtKB-UniRule"/>
</dbReference>
<dbReference type="GO" id="GO:0006265">
    <property type="term" value="P:DNA topological change"/>
    <property type="evidence" value="ECO:0007669"/>
    <property type="project" value="UniProtKB-UniRule"/>
</dbReference>
<dbReference type="CDD" id="cd00823">
    <property type="entry name" value="TopoIIB_Trans"/>
    <property type="match status" value="1"/>
</dbReference>
<dbReference type="FunFam" id="3.30.565.10:FF:000062">
    <property type="entry name" value="Type 2 DNA topoisomerase 6 subunit B"/>
    <property type="match status" value="1"/>
</dbReference>
<dbReference type="Gene3D" id="1.10.8.50">
    <property type="match status" value="1"/>
</dbReference>
<dbReference type="Gene3D" id="3.30.230.10">
    <property type="match status" value="1"/>
</dbReference>
<dbReference type="Gene3D" id="3.30.565.10">
    <property type="entry name" value="Histidine kinase-like ATPase, C-terminal domain"/>
    <property type="match status" value="1"/>
</dbReference>
<dbReference type="HAMAP" id="MF_00322">
    <property type="entry name" value="Top6B"/>
    <property type="match status" value="1"/>
</dbReference>
<dbReference type="InterPro" id="IPR036890">
    <property type="entry name" value="HATPase_C_sf"/>
</dbReference>
<dbReference type="InterPro" id="IPR020568">
    <property type="entry name" value="Ribosomal_Su5_D2-typ_SF"/>
</dbReference>
<dbReference type="InterPro" id="IPR014721">
    <property type="entry name" value="Ribsml_uS5_D2-typ_fold_subgr"/>
</dbReference>
<dbReference type="InterPro" id="IPR005734">
    <property type="entry name" value="TopoVI_B"/>
</dbReference>
<dbReference type="InterPro" id="IPR015320">
    <property type="entry name" value="TopoVI_B_transducer"/>
</dbReference>
<dbReference type="NCBIfam" id="NF003218">
    <property type="entry name" value="PRK04184.1"/>
    <property type="match status" value="1"/>
</dbReference>
<dbReference type="NCBIfam" id="TIGR01052">
    <property type="entry name" value="top6b"/>
    <property type="match status" value="1"/>
</dbReference>
<dbReference type="PANTHER" id="PTHR48444">
    <property type="entry name" value="DNA TOPOISOMERASE 6 SUBUNIT B"/>
    <property type="match status" value="1"/>
</dbReference>
<dbReference type="PANTHER" id="PTHR48444:SF1">
    <property type="entry name" value="DNA TOPOISOMERASE 6 SUBUNIT B"/>
    <property type="match status" value="1"/>
</dbReference>
<dbReference type="Pfam" id="PF02518">
    <property type="entry name" value="HATPase_c"/>
    <property type="match status" value="1"/>
</dbReference>
<dbReference type="Pfam" id="PF09239">
    <property type="entry name" value="Topo-VIb_trans"/>
    <property type="match status" value="1"/>
</dbReference>
<dbReference type="PIRSF" id="PIRSF006553">
    <property type="entry name" value="TopoVI_B"/>
    <property type="match status" value="1"/>
</dbReference>
<dbReference type="SMART" id="SM00387">
    <property type="entry name" value="HATPase_c"/>
    <property type="match status" value="1"/>
</dbReference>
<dbReference type="SUPFAM" id="SSF55874">
    <property type="entry name" value="ATPase domain of HSP90 chaperone/DNA topoisomerase II/histidine kinase"/>
    <property type="match status" value="1"/>
</dbReference>
<dbReference type="SUPFAM" id="SSF54211">
    <property type="entry name" value="Ribosomal protein S5 domain 2-like"/>
    <property type="match status" value="1"/>
</dbReference>
<protein>
    <recommendedName>
        <fullName evidence="1">Type 2 DNA topoisomerase 6 subunit B</fullName>
        <ecNumber evidence="1">5.6.2.2</ecNumber>
    </recommendedName>
    <alternativeName>
        <fullName evidence="1">Type II DNA topoisomerase VI subunit B</fullName>
        <shortName evidence="1">TopoVI-B</shortName>
    </alternativeName>
</protein>
<organism>
    <name type="scientific">Thermococcus sibiricus (strain DSM 12597 / MM 739)</name>
    <dbReference type="NCBI Taxonomy" id="604354"/>
    <lineage>
        <taxon>Archaea</taxon>
        <taxon>Methanobacteriati</taxon>
        <taxon>Methanobacteriota</taxon>
        <taxon>Thermococci</taxon>
        <taxon>Thermococcales</taxon>
        <taxon>Thermococcaceae</taxon>
        <taxon>Thermococcus</taxon>
    </lineage>
</organism>
<gene>
    <name evidence="1" type="primary">top6B</name>
    <name type="ordered locus">TSIB_1105</name>
</gene>
<proteinExistence type="inferred from homology"/>
<sequence length="566" mass="64051">MANSEADKLFKEFKIQSVSEFFRRNAAMLGYTGKLRSLTTLIHEAVTNSLDACEEAGILPYVRVEIEELGTEHYKIIVEDNGPGIPEKFIAHVFGKMLAGTKAHRNIQSRGQQGIGISGAVMFAQITSGKATRIITSTGEEEIIEAWVGIDVDKNEGKIFKKIKHPNPTGWRGTRIEMEVKDVRYIRSKQGVYWYLKLTAIANPHAHIEFIEPDGKLIVFSRSSEELPEPPEEMKPHPKGIITDDIYRMAQRTTRTTVRTFLIGEFSRISDKKIDELVQYITALRLIKEEEEQNVKEQLMKRLVDGEVDKIIASFGKRGKKVLREVRKIMEKPPKKLTWHEAEEIVEAFKYMTFLAPPTHGLRPIGEENIEKGLTGILRPEFVTSVTRPPKVYRGGIPFQVEVGLAFGGELSSGFDLLRYANRVPLLFDAGSCVITSAARNIDWKRYRVDDVDRAPLALLVNVVSVHVPYTSTGKQSVANEEEIYEEIRLAVMDVARRLAKYLGGKHRKLYQVKRRKTLEKYVPEVSRALSILTGLPEGEIKKMLVTIIEKKFESIDEAVEAESDA</sequence>
<comment type="function">
    <text evidence="1">Relaxes both positive and negative superturns and exhibits a strong decatenase activity.</text>
</comment>
<comment type="catalytic activity">
    <reaction evidence="1">
        <text>ATP-dependent breakage, passage and rejoining of double-stranded DNA.</text>
        <dbReference type="EC" id="5.6.2.2"/>
    </reaction>
</comment>
<comment type="subunit">
    <text evidence="1">Homodimer. Heterotetramer of two Top6A and two Top6B chains.</text>
</comment>
<comment type="similarity">
    <text evidence="1">Belongs to the TOP6B family.</text>
</comment>
<name>TOP6B_THESM</name>
<reference key="1">
    <citation type="journal article" date="2009" name="Appl. Environ. Microbiol.">
        <title>Metabolic versatility and indigenous origin of the archaeon Thermococcus sibiricus, isolated from a siberian oil reservoir, as revealed by genome analysis.</title>
        <authorList>
            <person name="Mardanov A.V."/>
            <person name="Ravin N.V."/>
            <person name="Svetlitchnyi V.A."/>
            <person name="Beletsky A.V."/>
            <person name="Miroshnichenko M.L."/>
            <person name="Bonch-Osmolovskaya E.A."/>
            <person name="Skryabin K.G."/>
        </authorList>
    </citation>
    <scope>NUCLEOTIDE SEQUENCE [LARGE SCALE GENOMIC DNA]</scope>
    <source>
        <strain>DSM 12597 / MM 739</strain>
    </source>
</reference>
<accession>C6A3G4</accession>
<evidence type="ECO:0000255" key="1">
    <source>
        <dbReference type="HAMAP-Rule" id="MF_00322"/>
    </source>
</evidence>
<keyword id="KW-0067">ATP-binding</keyword>
<keyword id="KW-0238">DNA-binding</keyword>
<keyword id="KW-0413">Isomerase</keyword>
<keyword id="KW-0547">Nucleotide-binding</keyword>
<keyword id="KW-1185">Reference proteome</keyword>
<keyword id="KW-0799">Topoisomerase</keyword>